<keyword id="KW-0001">2Fe-2S</keyword>
<keyword id="KW-0072">Autophagy</keyword>
<keyword id="KW-0256">Endoplasmic reticulum</keyword>
<keyword id="KW-0408">Iron</keyword>
<keyword id="KW-0411">Iron-sulfur</keyword>
<keyword id="KW-0472">Membrane</keyword>
<keyword id="KW-0479">Metal-binding</keyword>
<keyword id="KW-0496">Mitochondrion</keyword>
<keyword id="KW-1000">Mitochondrion outer membrane</keyword>
<keyword id="KW-1185">Reference proteome</keyword>
<keyword id="KW-0812">Transmembrane</keyword>
<keyword id="KW-1133">Transmembrane helix</keyword>
<evidence type="ECO:0000250" key="1"/>
<evidence type="ECO:0000255" key="2"/>
<evidence type="ECO:0000305" key="3"/>
<reference key="1">
    <citation type="submission" date="2004-07" db="EMBL/GenBank/DDBJ databases">
        <authorList>
            <consortium name="NIH - Xenopus Gene Collection (XGC) project"/>
        </authorList>
    </citation>
    <scope>NUCLEOTIDE SEQUENCE [LARGE SCALE MRNA]</scope>
    <source>
        <tissue>Spleen</tissue>
    </source>
</reference>
<name>CID2B_XENLA</name>
<organism>
    <name type="scientific">Xenopus laevis</name>
    <name type="common">African clawed frog</name>
    <dbReference type="NCBI Taxonomy" id="8355"/>
    <lineage>
        <taxon>Eukaryota</taxon>
        <taxon>Metazoa</taxon>
        <taxon>Chordata</taxon>
        <taxon>Craniata</taxon>
        <taxon>Vertebrata</taxon>
        <taxon>Euteleostomi</taxon>
        <taxon>Amphibia</taxon>
        <taxon>Batrachia</taxon>
        <taxon>Anura</taxon>
        <taxon>Pipoidea</taxon>
        <taxon>Pipidae</taxon>
        <taxon>Xenopodinae</taxon>
        <taxon>Xenopus</taxon>
        <taxon>Xenopus</taxon>
    </lineage>
</organism>
<protein>
    <recommendedName>
        <fullName>CDGSH iron-sulfur domain-containing protein 2B</fullName>
    </recommendedName>
</protein>
<accession>Q6AZG1</accession>
<sequence>MMLESLARVFKVQLPAYLKRLPIPDSIAGFIRLTVLEWLRLLPFLGVLALLGYLAIRPFLPKKKQQKDSLINLKIQKENPKVVNEINIEDLHLAKAAYCRCWRSKTFPVCDGSHNKHNELTGDNVGPLILKKKEV</sequence>
<feature type="chain" id="PRO_0000316008" description="CDGSH iron-sulfur domain-containing protein 2B">
    <location>
        <begin position="1"/>
        <end position="135"/>
    </location>
</feature>
<feature type="topological domain" description="Lumenal" evidence="2">
    <location>
        <begin position="1"/>
        <end position="37"/>
    </location>
</feature>
<feature type="transmembrane region" description="Helical" evidence="2">
    <location>
        <begin position="38"/>
        <end position="60"/>
    </location>
</feature>
<feature type="topological domain" description="Cytoplasmic" evidence="2">
    <location>
        <begin position="61"/>
        <end position="135"/>
    </location>
</feature>
<feature type="binding site" evidence="1">
    <location>
        <position position="99"/>
    </location>
    <ligand>
        <name>[2Fe-2S] cluster</name>
        <dbReference type="ChEBI" id="CHEBI:190135"/>
    </ligand>
</feature>
<feature type="binding site" evidence="1">
    <location>
        <position position="101"/>
    </location>
    <ligand>
        <name>[2Fe-2S] cluster</name>
        <dbReference type="ChEBI" id="CHEBI:190135"/>
    </ligand>
</feature>
<feature type="binding site" evidence="1">
    <location>
        <position position="110"/>
    </location>
    <ligand>
        <name>[2Fe-2S] cluster</name>
        <dbReference type="ChEBI" id="CHEBI:190135"/>
    </ligand>
</feature>
<feature type="binding site" evidence="1">
    <location>
        <position position="114"/>
    </location>
    <ligand>
        <name>[2Fe-2S] cluster</name>
        <dbReference type="ChEBI" id="CHEBI:190135"/>
    </ligand>
</feature>
<proteinExistence type="evidence at transcript level"/>
<gene>
    <name type="primary">cisd2-b</name>
</gene>
<comment type="function">
    <text evidence="1">Regulator of autophagy that contributes to antagonize becn1-mediated cellular autophagy at the endoplasmic reticulum. Participates in the interaction of bcl2 with becn1 and is required for bcl2-mediated depression of endoplasmic reticulum Ca(2+) stores during autophagy (By similarity).</text>
</comment>
<comment type="cofactor">
    <cofactor evidence="1">
        <name>[2Fe-2S] cluster</name>
        <dbReference type="ChEBI" id="CHEBI:190135"/>
    </cofactor>
    <text evidence="1">Binds 1 [2Fe-2S] cluster.</text>
</comment>
<comment type="subunit">
    <text evidence="1">Homodimer.</text>
</comment>
<comment type="subcellular location">
    <subcellularLocation>
        <location evidence="1">Endoplasmic reticulum membrane</location>
        <topology evidence="1">Single-pass membrane protein</topology>
    </subcellularLocation>
    <subcellularLocation>
        <location evidence="1">Mitochondrion outer membrane</location>
        <topology evidence="1">Single-pass membrane protein</topology>
    </subcellularLocation>
</comment>
<comment type="similarity">
    <text evidence="3">Belongs to the CISD protein family. CISD2 subfamily.</text>
</comment>
<dbReference type="EMBL" id="BC078048">
    <property type="protein sequence ID" value="AAH78048.1"/>
    <property type="molecule type" value="mRNA"/>
</dbReference>
<dbReference type="RefSeq" id="NP_001087133.1">
    <property type="nucleotide sequence ID" value="NM_001093664.1"/>
</dbReference>
<dbReference type="SMR" id="Q6AZG1"/>
<dbReference type="DNASU" id="447022"/>
<dbReference type="GeneID" id="447022"/>
<dbReference type="KEGG" id="xla:447022"/>
<dbReference type="AGR" id="Xenbase:XB-GENE-6254579"/>
<dbReference type="CTD" id="447022"/>
<dbReference type="Xenbase" id="XB-GENE-6254579">
    <property type="gene designation" value="cisd2.S"/>
</dbReference>
<dbReference type="OrthoDB" id="449252at2759"/>
<dbReference type="Proteomes" id="UP000186698">
    <property type="component" value="Chromosome 1S"/>
</dbReference>
<dbReference type="Bgee" id="447022">
    <property type="expression patterns" value="Expressed in spleen and 19 other cell types or tissues"/>
</dbReference>
<dbReference type="GO" id="GO:0005789">
    <property type="term" value="C:endoplasmic reticulum membrane"/>
    <property type="evidence" value="ECO:0000250"/>
    <property type="project" value="UniProtKB"/>
</dbReference>
<dbReference type="GO" id="GO:0005741">
    <property type="term" value="C:mitochondrial outer membrane"/>
    <property type="evidence" value="ECO:0000250"/>
    <property type="project" value="UniProtKB"/>
</dbReference>
<dbReference type="GO" id="GO:0051537">
    <property type="term" value="F:2 iron, 2 sulfur cluster binding"/>
    <property type="evidence" value="ECO:0000250"/>
    <property type="project" value="UniProtKB"/>
</dbReference>
<dbReference type="GO" id="GO:0046872">
    <property type="term" value="F:metal ion binding"/>
    <property type="evidence" value="ECO:0007669"/>
    <property type="project" value="UniProtKB-KW"/>
</dbReference>
<dbReference type="GO" id="GO:0042803">
    <property type="term" value="F:protein homodimerization activity"/>
    <property type="evidence" value="ECO:0000250"/>
    <property type="project" value="UniProtKB"/>
</dbReference>
<dbReference type="GO" id="GO:0000422">
    <property type="term" value="P:autophagy of mitochondrion"/>
    <property type="evidence" value="ECO:0000250"/>
    <property type="project" value="UniProtKB"/>
</dbReference>
<dbReference type="GO" id="GO:0010506">
    <property type="term" value="P:regulation of autophagy"/>
    <property type="evidence" value="ECO:0000250"/>
    <property type="project" value="UniProtKB"/>
</dbReference>
<dbReference type="FunFam" id="3.40.5.90:FF:000001">
    <property type="entry name" value="CDGSH iron-sulfur domain-containing protein 1"/>
    <property type="match status" value="1"/>
</dbReference>
<dbReference type="Gene3D" id="3.40.5.90">
    <property type="entry name" value="CDGSH iron-sulfur domain, mitoNEET-type"/>
    <property type="match status" value="1"/>
</dbReference>
<dbReference type="InterPro" id="IPR045131">
    <property type="entry name" value="CISD1/2"/>
</dbReference>
<dbReference type="InterPro" id="IPR018967">
    <property type="entry name" value="FeS-contain_CDGSH-typ"/>
</dbReference>
<dbReference type="InterPro" id="IPR019610">
    <property type="entry name" value="FeS-contain_mitoNEET_N"/>
</dbReference>
<dbReference type="InterPro" id="IPR042216">
    <property type="entry name" value="MitoNEET_CISD"/>
</dbReference>
<dbReference type="PANTHER" id="PTHR13680">
    <property type="entry name" value="CDGSH IRON-SULFUR DOMAIN-CONTAINING PROTEIN 1"/>
    <property type="match status" value="1"/>
</dbReference>
<dbReference type="PANTHER" id="PTHR13680:SF33">
    <property type="entry name" value="CDGSH IRON-SULFUR DOMAIN-CONTAINING PROTEIN 2"/>
    <property type="match status" value="1"/>
</dbReference>
<dbReference type="Pfam" id="PF10660">
    <property type="entry name" value="MitoNEET_N"/>
    <property type="match status" value="1"/>
</dbReference>
<dbReference type="Pfam" id="PF09360">
    <property type="entry name" value="zf-CDGSH"/>
    <property type="match status" value="1"/>
</dbReference>
<dbReference type="SMART" id="SM00704">
    <property type="entry name" value="ZnF_CDGSH"/>
    <property type="match status" value="1"/>
</dbReference>